<dbReference type="EMBL" id="CP001138">
    <property type="protein sequence ID" value="ACH48844.1"/>
    <property type="molecule type" value="Genomic_DNA"/>
</dbReference>
<dbReference type="RefSeq" id="WP_001284251.1">
    <property type="nucleotide sequence ID" value="NC_011149.1"/>
</dbReference>
<dbReference type="SMR" id="B5F1Z4"/>
<dbReference type="KEGG" id="sea:SeAg_B1070"/>
<dbReference type="HOGENOM" id="CLU_144710_3_1_6"/>
<dbReference type="Proteomes" id="UP000008819">
    <property type="component" value="Chromosome"/>
</dbReference>
<dbReference type="Gene3D" id="1.10.1660.10">
    <property type="match status" value="1"/>
</dbReference>
<dbReference type="HAMAP" id="MF_01155">
    <property type="entry name" value="CbpM"/>
    <property type="match status" value="1"/>
</dbReference>
<dbReference type="InterPro" id="IPR022835">
    <property type="entry name" value="CbpM"/>
</dbReference>
<dbReference type="NCBIfam" id="NF007617">
    <property type="entry name" value="PRK10265.1"/>
    <property type="match status" value="1"/>
</dbReference>
<dbReference type="Pfam" id="PF13591">
    <property type="entry name" value="MerR_2"/>
    <property type="match status" value="1"/>
</dbReference>
<accession>B5F1Z4</accession>
<reference key="1">
    <citation type="journal article" date="2011" name="J. Bacteriol.">
        <title>Comparative genomics of 28 Salmonella enterica isolates: evidence for CRISPR-mediated adaptive sublineage evolution.</title>
        <authorList>
            <person name="Fricke W.F."/>
            <person name="Mammel M.K."/>
            <person name="McDermott P.F."/>
            <person name="Tartera C."/>
            <person name="White D.G."/>
            <person name="Leclerc J.E."/>
            <person name="Ravel J."/>
            <person name="Cebula T.A."/>
        </authorList>
    </citation>
    <scope>NUCLEOTIDE SEQUENCE [LARGE SCALE GENOMIC DNA]</scope>
    <source>
        <strain>SL483</strain>
    </source>
</reference>
<name>CBPM_SALA4</name>
<proteinExistence type="inferred from homology"/>
<feature type="chain" id="PRO_1000137775" description="Chaperone modulatory protein CbpM">
    <location>
        <begin position="1"/>
        <end position="101"/>
    </location>
</feature>
<comment type="function">
    <text evidence="1">Interacts with CbpA and inhibits both the DnaJ-like co-chaperone activity and the DNA binding activity of CbpA. Together with CbpA, modulates the activity of the DnaK chaperone system. Does not inhibit the co-chaperone activity of DnaJ.</text>
</comment>
<comment type="similarity">
    <text evidence="1">Belongs to the CbpM family.</text>
</comment>
<gene>
    <name evidence="1" type="primary">cbpM</name>
    <name type="ordered locus">SeAg_B1070</name>
</gene>
<sequence length="101" mass="11595">MANITVTFTITEFCLHTGVTEEELNEIVGLGVIEPYEDDNADWQFDDRAASVVQRALRLREELALDWPGIAVALTLLEENSRLREENRLLLQRLSRFISHP</sequence>
<evidence type="ECO:0000255" key="1">
    <source>
        <dbReference type="HAMAP-Rule" id="MF_01155"/>
    </source>
</evidence>
<protein>
    <recommendedName>
        <fullName evidence="1">Chaperone modulatory protein CbpM</fullName>
    </recommendedName>
</protein>
<organism>
    <name type="scientific">Salmonella agona (strain SL483)</name>
    <dbReference type="NCBI Taxonomy" id="454166"/>
    <lineage>
        <taxon>Bacteria</taxon>
        <taxon>Pseudomonadati</taxon>
        <taxon>Pseudomonadota</taxon>
        <taxon>Gammaproteobacteria</taxon>
        <taxon>Enterobacterales</taxon>
        <taxon>Enterobacteriaceae</taxon>
        <taxon>Salmonella</taxon>
    </lineage>
</organism>